<reference key="1">
    <citation type="submission" date="2007-03" db="EMBL/GenBank/DDBJ databases">
        <title>Complete sequence of Shewanella loihica PV-4.</title>
        <authorList>
            <consortium name="US DOE Joint Genome Institute"/>
            <person name="Copeland A."/>
            <person name="Lucas S."/>
            <person name="Lapidus A."/>
            <person name="Barry K."/>
            <person name="Detter J.C."/>
            <person name="Glavina del Rio T."/>
            <person name="Hammon N."/>
            <person name="Israni S."/>
            <person name="Dalin E."/>
            <person name="Tice H."/>
            <person name="Pitluck S."/>
            <person name="Chain P."/>
            <person name="Malfatti S."/>
            <person name="Shin M."/>
            <person name="Vergez L."/>
            <person name="Schmutz J."/>
            <person name="Larimer F."/>
            <person name="Land M."/>
            <person name="Hauser L."/>
            <person name="Kyrpides N."/>
            <person name="Mikhailova N."/>
            <person name="Romine M.F."/>
            <person name="Serres G."/>
            <person name="Fredrickson J."/>
            <person name="Tiedje J."/>
            <person name="Richardson P."/>
        </authorList>
    </citation>
    <scope>NUCLEOTIDE SEQUENCE [LARGE SCALE GENOMIC DNA]</scope>
    <source>
        <strain>ATCC BAA-1088 / PV-4</strain>
    </source>
</reference>
<organism>
    <name type="scientific">Shewanella loihica (strain ATCC BAA-1088 / PV-4)</name>
    <dbReference type="NCBI Taxonomy" id="323850"/>
    <lineage>
        <taxon>Bacteria</taxon>
        <taxon>Pseudomonadati</taxon>
        <taxon>Pseudomonadota</taxon>
        <taxon>Gammaproteobacteria</taxon>
        <taxon>Alteromonadales</taxon>
        <taxon>Shewanellaceae</taxon>
        <taxon>Shewanella</taxon>
    </lineage>
</organism>
<gene>
    <name evidence="1" type="primary">pyrH</name>
    <name type="ordered locus">Shew_2633</name>
</gene>
<comment type="function">
    <text evidence="1">Catalyzes the reversible phosphorylation of UMP to UDP.</text>
</comment>
<comment type="catalytic activity">
    <reaction evidence="1">
        <text>UMP + ATP = UDP + ADP</text>
        <dbReference type="Rhea" id="RHEA:24400"/>
        <dbReference type="ChEBI" id="CHEBI:30616"/>
        <dbReference type="ChEBI" id="CHEBI:57865"/>
        <dbReference type="ChEBI" id="CHEBI:58223"/>
        <dbReference type="ChEBI" id="CHEBI:456216"/>
        <dbReference type="EC" id="2.7.4.22"/>
    </reaction>
</comment>
<comment type="activity regulation">
    <text evidence="1">Allosterically activated by GTP. Inhibited by UTP.</text>
</comment>
<comment type="pathway">
    <text evidence="1">Pyrimidine metabolism; CTP biosynthesis via de novo pathway; UDP from UMP (UMPK route): step 1/1.</text>
</comment>
<comment type="subunit">
    <text evidence="1">Homohexamer.</text>
</comment>
<comment type="subcellular location">
    <subcellularLocation>
        <location evidence="1">Cytoplasm</location>
    </subcellularLocation>
</comment>
<comment type="similarity">
    <text evidence="1">Belongs to the UMP kinase family.</text>
</comment>
<name>PYRH_SHELP</name>
<evidence type="ECO:0000255" key="1">
    <source>
        <dbReference type="HAMAP-Rule" id="MF_01220"/>
    </source>
</evidence>
<protein>
    <recommendedName>
        <fullName evidence="1">Uridylate kinase</fullName>
        <shortName evidence="1">UK</shortName>
        <ecNumber evidence="1">2.7.4.22</ecNumber>
    </recommendedName>
    <alternativeName>
        <fullName evidence="1">Uridine monophosphate kinase</fullName>
        <shortName evidence="1">UMP kinase</shortName>
        <shortName evidence="1">UMPK</shortName>
    </alternativeName>
</protein>
<dbReference type="EC" id="2.7.4.22" evidence="1"/>
<dbReference type="EMBL" id="CP000606">
    <property type="protein sequence ID" value="ABO24499.1"/>
    <property type="molecule type" value="Genomic_DNA"/>
</dbReference>
<dbReference type="RefSeq" id="WP_011866430.1">
    <property type="nucleotide sequence ID" value="NC_009092.1"/>
</dbReference>
<dbReference type="SMR" id="A3QGA1"/>
<dbReference type="STRING" id="323850.Shew_2633"/>
<dbReference type="KEGG" id="slo:Shew_2633"/>
<dbReference type="eggNOG" id="COG0528">
    <property type="taxonomic scope" value="Bacteria"/>
</dbReference>
<dbReference type="HOGENOM" id="CLU_033861_0_0_6"/>
<dbReference type="OrthoDB" id="9807458at2"/>
<dbReference type="UniPathway" id="UPA00159">
    <property type="reaction ID" value="UER00275"/>
</dbReference>
<dbReference type="Proteomes" id="UP000001558">
    <property type="component" value="Chromosome"/>
</dbReference>
<dbReference type="GO" id="GO:0005829">
    <property type="term" value="C:cytosol"/>
    <property type="evidence" value="ECO:0007669"/>
    <property type="project" value="TreeGrafter"/>
</dbReference>
<dbReference type="GO" id="GO:0005524">
    <property type="term" value="F:ATP binding"/>
    <property type="evidence" value="ECO:0007669"/>
    <property type="project" value="UniProtKB-KW"/>
</dbReference>
<dbReference type="GO" id="GO:0033862">
    <property type="term" value="F:UMP kinase activity"/>
    <property type="evidence" value="ECO:0007669"/>
    <property type="project" value="UniProtKB-EC"/>
</dbReference>
<dbReference type="GO" id="GO:0044210">
    <property type="term" value="P:'de novo' CTP biosynthetic process"/>
    <property type="evidence" value="ECO:0007669"/>
    <property type="project" value="UniProtKB-UniRule"/>
</dbReference>
<dbReference type="GO" id="GO:0006225">
    <property type="term" value="P:UDP biosynthetic process"/>
    <property type="evidence" value="ECO:0007669"/>
    <property type="project" value="TreeGrafter"/>
</dbReference>
<dbReference type="CDD" id="cd04254">
    <property type="entry name" value="AAK_UMPK-PyrH-Ec"/>
    <property type="match status" value="1"/>
</dbReference>
<dbReference type="FunFam" id="3.40.1160.10:FF:000001">
    <property type="entry name" value="Uridylate kinase"/>
    <property type="match status" value="1"/>
</dbReference>
<dbReference type="Gene3D" id="3.40.1160.10">
    <property type="entry name" value="Acetylglutamate kinase-like"/>
    <property type="match status" value="1"/>
</dbReference>
<dbReference type="HAMAP" id="MF_01220_B">
    <property type="entry name" value="PyrH_B"/>
    <property type="match status" value="1"/>
</dbReference>
<dbReference type="InterPro" id="IPR036393">
    <property type="entry name" value="AceGlu_kinase-like_sf"/>
</dbReference>
<dbReference type="InterPro" id="IPR001048">
    <property type="entry name" value="Asp/Glu/Uridylate_kinase"/>
</dbReference>
<dbReference type="InterPro" id="IPR011817">
    <property type="entry name" value="Uridylate_kinase"/>
</dbReference>
<dbReference type="InterPro" id="IPR015963">
    <property type="entry name" value="Uridylate_kinase_bac"/>
</dbReference>
<dbReference type="NCBIfam" id="TIGR02075">
    <property type="entry name" value="pyrH_bact"/>
    <property type="match status" value="1"/>
</dbReference>
<dbReference type="PANTHER" id="PTHR42833">
    <property type="entry name" value="URIDYLATE KINASE"/>
    <property type="match status" value="1"/>
</dbReference>
<dbReference type="PANTHER" id="PTHR42833:SF4">
    <property type="entry name" value="URIDYLATE KINASE PUMPKIN, CHLOROPLASTIC"/>
    <property type="match status" value="1"/>
</dbReference>
<dbReference type="Pfam" id="PF00696">
    <property type="entry name" value="AA_kinase"/>
    <property type="match status" value="1"/>
</dbReference>
<dbReference type="PIRSF" id="PIRSF005650">
    <property type="entry name" value="Uridylate_kin"/>
    <property type="match status" value="1"/>
</dbReference>
<dbReference type="SUPFAM" id="SSF53633">
    <property type="entry name" value="Carbamate kinase-like"/>
    <property type="match status" value="1"/>
</dbReference>
<sequence length="247" mass="26753">MSTNPKPAFRRILLKLSGEALMGEEGFGIDPKVLDRMAQEIKELVELGIQVGVVIGGGNLFRGEGLAQAGMNRVVGDHMGMLATVMNGLAMRDALHRAYVNARLMSAIPLKGVCDDYNWAEAISLLKSGRVVIFAAGTGNPFCTTDSAACLRGIEIEAEVVLKGTKVDGVYSDDPVKNPEAVKYDEMGYGEVLEKELKVMDLAAFTLARDHDMPILVFNMNKPGALRRVIMGDHEGTLIRSSRKTAE</sequence>
<feature type="chain" id="PRO_1000054009" description="Uridylate kinase">
    <location>
        <begin position="1"/>
        <end position="247"/>
    </location>
</feature>
<feature type="region of interest" description="Involved in allosteric activation by GTP" evidence="1">
    <location>
        <begin position="23"/>
        <end position="28"/>
    </location>
</feature>
<feature type="binding site" evidence="1">
    <location>
        <begin position="15"/>
        <end position="18"/>
    </location>
    <ligand>
        <name>ATP</name>
        <dbReference type="ChEBI" id="CHEBI:30616"/>
    </ligand>
</feature>
<feature type="binding site" evidence="1">
    <location>
        <position position="57"/>
    </location>
    <ligand>
        <name>UMP</name>
        <dbReference type="ChEBI" id="CHEBI:57865"/>
    </ligand>
</feature>
<feature type="binding site" evidence="1">
    <location>
        <position position="58"/>
    </location>
    <ligand>
        <name>ATP</name>
        <dbReference type="ChEBI" id="CHEBI:30616"/>
    </ligand>
</feature>
<feature type="binding site" evidence="1">
    <location>
        <position position="62"/>
    </location>
    <ligand>
        <name>ATP</name>
        <dbReference type="ChEBI" id="CHEBI:30616"/>
    </ligand>
</feature>
<feature type="binding site" evidence="1">
    <location>
        <position position="77"/>
    </location>
    <ligand>
        <name>UMP</name>
        <dbReference type="ChEBI" id="CHEBI:57865"/>
    </ligand>
</feature>
<feature type="binding site" evidence="1">
    <location>
        <begin position="138"/>
        <end position="145"/>
    </location>
    <ligand>
        <name>UMP</name>
        <dbReference type="ChEBI" id="CHEBI:57865"/>
    </ligand>
</feature>
<feature type="binding site" evidence="1">
    <location>
        <position position="165"/>
    </location>
    <ligand>
        <name>ATP</name>
        <dbReference type="ChEBI" id="CHEBI:30616"/>
    </ligand>
</feature>
<feature type="binding site" evidence="1">
    <location>
        <position position="171"/>
    </location>
    <ligand>
        <name>ATP</name>
        <dbReference type="ChEBI" id="CHEBI:30616"/>
    </ligand>
</feature>
<feature type="binding site" evidence="1">
    <location>
        <position position="174"/>
    </location>
    <ligand>
        <name>ATP</name>
        <dbReference type="ChEBI" id="CHEBI:30616"/>
    </ligand>
</feature>
<keyword id="KW-0021">Allosteric enzyme</keyword>
<keyword id="KW-0067">ATP-binding</keyword>
<keyword id="KW-0963">Cytoplasm</keyword>
<keyword id="KW-0418">Kinase</keyword>
<keyword id="KW-0547">Nucleotide-binding</keyword>
<keyword id="KW-0665">Pyrimidine biosynthesis</keyword>
<keyword id="KW-1185">Reference proteome</keyword>
<keyword id="KW-0808">Transferase</keyword>
<accession>A3QGA1</accession>
<proteinExistence type="inferred from homology"/>